<sequence>MAKRGFNCLLLSISEIDLPVKRLESPNKTRRPYGASIY</sequence>
<dbReference type="EMBL" id="AY172581">
    <property type="status" value="NOT_ANNOTATED_CDS"/>
    <property type="molecule type" value="Genomic_DNA"/>
</dbReference>
<dbReference type="FunCoup" id="C0HLU6">
    <property type="interactions" value="11"/>
</dbReference>
<dbReference type="InParanoid" id="C0HLU6"/>
<dbReference type="Proteomes" id="UP000002494">
    <property type="component" value="Mitochondrion"/>
</dbReference>
<dbReference type="GO" id="GO:0005737">
    <property type="term" value="C:cytoplasm"/>
    <property type="evidence" value="ECO:0000314"/>
    <property type="project" value="UniProtKB"/>
</dbReference>
<dbReference type="GO" id="GO:0005576">
    <property type="term" value="C:extracellular region"/>
    <property type="evidence" value="ECO:0007669"/>
    <property type="project" value="UniProtKB-SubCell"/>
</dbReference>
<dbReference type="GO" id="GO:0005739">
    <property type="term" value="C:mitochondrion"/>
    <property type="evidence" value="ECO:0000314"/>
    <property type="project" value="UniProtKB"/>
</dbReference>
<dbReference type="GO" id="GO:0006915">
    <property type="term" value="P:apoptotic process"/>
    <property type="evidence" value="ECO:0007669"/>
    <property type="project" value="UniProtKB-KW"/>
</dbReference>
<dbReference type="GO" id="GO:1904646">
    <property type="term" value="P:cellular response to amyloid-beta"/>
    <property type="evidence" value="ECO:0000314"/>
    <property type="project" value="UniProtKB"/>
</dbReference>
<dbReference type="GO" id="GO:0043066">
    <property type="term" value="P:negative regulation of apoptotic process"/>
    <property type="evidence" value="ECO:0000314"/>
    <property type="project" value="UniProtKB"/>
</dbReference>
<dbReference type="GO" id="GO:0043524">
    <property type="term" value="P:negative regulation of neuron apoptotic process"/>
    <property type="evidence" value="ECO:0000314"/>
    <property type="project" value="UniProtKB"/>
</dbReference>
<dbReference type="CDD" id="cd20245">
    <property type="entry name" value="humanin"/>
    <property type="match status" value="1"/>
</dbReference>
<dbReference type="InterPro" id="IPR028139">
    <property type="entry name" value="Humanin"/>
</dbReference>
<dbReference type="PANTHER" id="PTHR33895">
    <property type="entry name" value="HUMANIN-LIKE 4"/>
    <property type="match status" value="1"/>
</dbReference>
<dbReference type="PANTHER" id="PTHR33895:SF5">
    <property type="entry name" value="HUMANIN-LIKE 4"/>
    <property type="match status" value="1"/>
</dbReference>
<dbReference type="Pfam" id="PF15040">
    <property type="entry name" value="Humanin"/>
    <property type="match status" value="1"/>
</dbReference>
<keyword id="KW-0053">Apoptosis</keyword>
<keyword id="KW-0963">Cytoplasm</keyword>
<keyword id="KW-0496">Mitochondrion</keyword>
<keyword id="KW-1185">Reference proteome</keyword>
<keyword id="KW-0964">Secreted</keyword>
<accession>C0HLU6</accession>
<organism>
    <name type="scientific">Rattus norvegicus</name>
    <name type="common">Rat</name>
    <dbReference type="NCBI Taxonomy" id="10116"/>
    <lineage>
        <taxon>Eukaryota</taxon>
        <taxon>Metazoa</taxon>
        <taxon>Chordata</taxon>
        <taxon>Craniata</taxon>
        <taxon>Vertebrata</taxon>
        <taxon>Euteleostomi</taxon>
        <taxon>Mammalia</taxon>
        <taxon>Eutheria</taxon>
        <taxon>Euarchontoglires</taxon>
        <taxon>Glires</taxon>
        <taxon>Rodentia</taxon>
        <taxon>Myomorpha</taxon>
        <taxon>Muroidea</taxon>
        <taxon>Muridae</taxon>
        <taxon>Murinae</taxon>
        <taxon>Rattus</taxon>
    </lineage>
</organism>
<evidence type="ECO:0000269" key="1">
    <source>
    </source>
</evidence>
<evidence type="ECO:0000269" key="2">
    <source>
    </source>
</evidence>
<evidence type="ECO:0000269" key="3">
    <source>
    </source>
</evidence>
<evidence type="ECO:0000269" key="4">
    <source>
    </source>
</evidence>
<evidence type="ECO:0000269" key="5">
    <source>
    </source>
</evidence>
<evidence type="ECO:0000269" key="6">
    <source>
    </source>
</evidence>
<evidence type="ECO:0000269" key="7">
    <source>
    </source>
</evidence>
<evidence type="ECO:0000269" key="8">
    <source>
    </source>
</evidence>
<evidence type="ECO:0000303" key="9">
    <source>
    </source>
</evidence>
<evidence type="ECO:0000303" key="10">
    <source>
    </source>
</evidence>
<evidence type="ECO:0000303" key="11">
    <source>
    </source>
</evidence>
<evidence type="ECO:0000303" key="12">
    <source>
    </source>
</evidence>
<evidence type="ECO:0000305" key="13"/>
<name>HMNL_RAT</name>
<proteinExistence type="evidence at protein level"/>
<comment type="function">
    <text evidence="1 2 4 5 7 8">Plays a role as a neuroprotective factor (PubMed:12154011). Protects against neuronal cell death induced by amyloid-beta peptides (PubMed:12154011). Also protects against excitotoxic cell death (PubMed:12154011). Prevents amyloid-beta peptide-induced spatial learning and memory impairments, protects against amyloid-beta peptide-induced suppression of hippocampal long-term potentiation, and inhibits amyloid-beta peptide-induced activation of STAT3 and inhibition of CASP3 (PubMed:23996574). Prevents glutamate-induced dendritic atrophy in hippocampal neurons and also prevents glutamate-induced decrease in SYP puncta number and total puncta area (PubMed:31214013). Protects anterior pituitary cells from TNF-induced apoptosis (PubMed:25360890). Plays a role in ovarian follicle development by acting as a cryoprotective factor for granulosa cells in the antral follicle (PubMed:33764899). Increases androgen production in Leydig cells and promotes Leydig cell survival by preventing apoptosis (PubMed:16619233).</text>
</comment>
<comment type="subcellular location">
    <subcellularLocation>
        <location evidence="6">Mitochondrion</location>
    </subcellularLocation>
    <subcellularLocation>
        <location evidence="2 7">Secreted</location>
    </subcellularLocation>
    <subcellularLocation>
        <location evidence="5">Cytoplasm</location>
    </subcellularLocation>
    <text evidence="5">Detected in the cytoplasm of anterior pituitary cells.</text>
</comment>
<comment type="tissue specificity">
    <text evidence="1 2 3 5 7 8">In the testis, expressed in Leydig cells at 10, 20 and 60 days of age (at protein level) (PubMed:16619233). Also expressed in pachytene spermatocytes at day 20 and in vessels, peritubular cells and spermatids at day 60 (PubMed:16619233). Not detected in Sertoli cells (at protein level) (PubMed:16619233). In the adult ovary, expressed in stromal cells, granulosa cells, theca cells and oocytes at diestrus and proestrus (at protein level) (PubMed:33764899). Expressed in the anterior pituitary where it is detected in lactotropes and somatotropes with lower levels in females than males (at protein level) (PubMed:25360890). In the hippocampus, expressed in astrocytes but not in neurons or oligodendrocytes (at protein level) (PubMed:31214013). Expressed in muscle, liver and hypothalamus but not in epididymal fat (at protein level) (PubMed:19623253). Widely expressed with highest levels in cardiac and skeletal muscle and lowest levels in lung, testis and uterus (PubMed:12154011). In the CNS, levels are relatively high in the cerebellum and cortex and low in the hippocampus (PubMed:12154011). In the hippocampus, lower levels are detected in ovariectomized animals than in controls (PubMed:31214013).</text>
</comment>
<comment type="developmental stage">
    <text evidence="3">Levels decline with increasing age.</text>
</comment>
<comment type="induction">
    <text evidence="2 5 7">Repressed by estrogen in anterior pituitary cells (PubMed:25360890). Induced by estrogen and progesterone in astrocytes (PubMed:31214013). Induced by growth hormone and Igf1 in Leydig cells at 10 and 40 days old but not at 60 days (PubMed:16619233).</text>
</comment>
<protein>
    <recommendedName>
        <fullName evidence="13">Humanin-like protein</fullName>
        <shortName evidence="11">HNr</shortName>
    </recommendedName>
    <alternativeName>
        <fullName evidence="9">Rattin</fullName>
    </alternativeName>
</protein>
<reference evidence="13" key="1">
    <citation type="journal article" date="2002" name="FASEB J.">
        <title>A novel rat gene encoding a Humanin-like peptide endowed with broad neuroprotective activity.</title>
        <authorList>
            <person name="Caricasole A."/>
            <person name="Bruno V."/>
            <person name="Cappuccio I."/>
            <person name="Melchiorri D."/>
            <person name="Copani A."/>
            <person name="Nicoletti F."/>
        </authorList>
    </citation>
    <scope>NUCLEOTIDE SEQUENCE [MRNA]</scope>
    <scope>FUNCTION</scope>
    <scope>TISSUE SPECIFICITY</scope>
</reference>
<reference evidence="13" key="2">
    <citation type="journal article" date="2004" name="Nature">
        <title>Genome sequence of the Brown Norway rat yields insights into mammalian evolution.</title>
        <authorList>
            <person name="Gibbs R.A."/>
            <person name="Weinstock G.M."/>
            <person name="Metzker M.L."/>
            <person name="Muzny D.M."/>
            <person name="Sodergren E.J."/>
            <person name="Scherer S."/>
            <person name="Scott G."/>
            <person name="Steffen D."/>
            <person name="Worley K.C."/>
            <person name="Burch P.E."/>
            <person name="Okwuonu G."/>
            <person name="Hines S."/>
            <person name="Lewis L."/>
            <person name="Deramo C."/>
            <person name="Delgado O."/>
            <person name="Dugan-Rocha S."/>
            <person name="Miner G."/>
            <person name="Morgan M."/>
            <person name="Hawes A."/>
            <person name="Gill R."/>
            <person name="Holt R.A."/>
            <person name="Adams M.D."/>
            <person name="Amanatides P.G."/>
            <person name="Baden-Tillson H."/>
            <person name="Barnstead M."/>
            <person name="Chin S."/>
            <person name="Evans C.A."/>
            <person name="Ferriera S."/>
            <person name="Fosler C."/>
            <person name="Glodek A."/>
            <person name="Gu Z."/>
            <person name="Jennings D."/>
            <person name="Kraft C.L."/>
            <person name="Nguyen T."/>
            <person name="Pfannkoch C.M."/>
            <person name="Sitter C."/>
            <person name="Sutton G.G."/>
            <person name="Venter J.C."/>
            <person name="Woodage T."/>
            <person name="Smith D."/>
            <person name="Lee H.-M."/>
            <person name="Gustafson E."/>
            <person name="Cahill P."/>
            <person name="Kana A."/>
            <person name="Doucette-Stamm L."/>
            <person name="Weinstock K."/>
            <person name="Fechtel K."/>
            <person name="Weiss R.B."/>
            <person name="Dunn D.M."/>
            <person name="Green E.D."/>
            <person name="Blakesley R.W."/>
            <person name="Bouffard G.G."/>
            <person name="De Jong P.J."/>
            <person name="Osoegawa K."/>
            <person name="Zhu B."/>
            <person name="Marra M."/>
            <person name="Schein J."/>
            <person name="Bosdet I."/>
            <person name="Fjell C."/>
            <person name="Jones S."/>
            <person name="Krzywinski M."/>
            <person name="Mathewson C."/>
            <person name="Siddiqui A."/>
            <person name="Wye N."/>
            <person name="McPherson J."/>
            <person name="Zhao S."/>
            <person name="Fraser C.M."/>
            <person name="Shetty J."/>
            <person name="Shatsman S."/>
            <person name="Geer K."/>
            <person name="Chen Y."/>
            <person name="Abramzon S."/>
            <person name="Nierman W.C."/>
            <person name="Havlak P.H."/>
            <person name="Chen R."/>
            <person name="Durbin K.J."/>
            <person name="Egan A."/>
            <person name="Ren Y."/>
            <person name="Song X.-Z."/>
            <person name="Li B."/>
            <person name="Liu Y."/>
            <person name="Qin X."/>
            <person name="Cawley S."/>
            <person name="Cooney A.J."/>
            <person name="D'Souza L.M."/>
            <person name="Martin K."/>
            <person name="Wu J.Q."/>
            <person name="Gonzalez-Garay M.L."/>
            <person name="Jackson A.R."/>
            <person name="Kalafus K.J."/>
            <person name="McLeod M.P."/>
            <person name="Milosavljevic A."/>
            <person name="Virk D."/>
            <person name="Volkov A."/>
            <person name="Wheeler D.A."/>
            <person name="Zhang Z."/>
            <person name="Bailey J.A."/>
            <person name="Eichler E.E."/>
            <person name="Tuzun E."/>
            <person name="Birney E."/>
            <person name="Mongin E."/>
            <person name="Ureta-Vidal A."/>
            <person name="Woodwark C."/>
            <person name="Zdobnov E."/>
            <person name="Bork P."/>
            <person name="Suyama M."/>
            <person name="Torrents D."/>
            <person name="Alexandersson M."/>
            <person name="Trask B.J."/>
            <person name="Young J.M."/>
            <person name="Huang H."/>
            <person name="Wang H."/>
            <person name="Xing H."/>
            <person name="Daniels S."/>
            <person name="Gietzen D."/>
            <person name="Schmidt J."/>
            <person name="Stevens K."/>
            <person name="Vitt U."/>
            <person name="Wingrove J."/>
            <person name="Camara F."/>
            <person name="Mar Alba M."/>
            <person name="Abril J.F."/>
            <person name="Guigo R."/>
            <person name="Smit A."/>
            <person name="Dubchak I."/>
            <person name="Rubin E.M."/>
            <person name="Couronne O."/>
            <person name="Poliakov A."/>
            <person name="Huebner N."/>
            <person name="Ganten D."/>
            <person name="Goesele C."/>
            <person name="Hummel O."/>
            <person name="Kreitler T."/>
            <person name="Lee Y.-A."/>
            <person name="Monti J."/>
            <person name="Schulz H."/>
            <person name="Zimdahl H."/>
            <person name="Himmelbauer H."/>
            <person name="Lehrach H."/>
            <person name="Jacob H.J."/>
            <person name="Bromberg S."/>
            <person name="Gullings-Handley J."/>
            <person name="Jensen-Seaman M.I."/>
            <person name="Kwitek A.E."/>
            <person name="Lazar J."/>
            <person name="Pasko D."/>
            <person name="Tonellato P.J."/>
            <person name="Twigger S."/>
            <person name="Ponting C.P."/>
            <person name="Duarte J.M."/>
            <person name="Rice S."/>
            <person name="Goodstadt L."/>
            <person name="Beatson S.A."/>
            <person name="Emes R.D."/>
            <person name="Winter E.E."/>
            <person name="Webber C."/>
            <person name="Brandt P."/>
            <person name="Nyakatura G."/>
            <person name="Adetobi M."/>
            <person name="Chiaromonte F."/>
            <person name="Elnitski L."/>
            <person name="Eswara P."/>
            <person name="Hardison R.C."/>
            <person name="Hou M."/>
            <person name="Kolbe D."/>
            <person name="Makova K."/>
            <person name="Miller W."/>
            <person name="Nekrutenko A."/>
            <person name="Riemer C."/>
            <person name="Schwartz S."/>
            <person name="Taylor J."/>
            <person name="Yang S."/>
            <person name="Zhang Y."/>
            <person name="Lindpaintner K."/>
            <person name="Andrews T.D."/>
            <person name="Caccamo M."/>
            <person name="Clamp M."/>
            <person name="Clarke L."/>
            <person name="Curwen V."/>
            <person name="Durbin R.M."/>
            <person name="Eyras E."/>
            <person name="Searle S.M."/>
            <person name="Cooper G.M."/>
            <person name="Batzoglou S."/>
            <person name="Brudno M."/>
            <person name="Sidow A."/>
            <person name="Stone E.A."/>
            <person name="Payseur B.A."/>
            <person name="Bourque G."/>
            <person name="Lopez-Otin C."/>
            <person name="Puente X.S."/>
            <person name="Chakrabarti K."/>
            <person name="Chatterji S."/>
            <person name="Dewey C."/>
            <person name="Pachter L."/>
            <person name="Bray N."/>
            <person name="Yap V.B."/>
            <person name="Caspi A."/>
            <person name="Tesler G."/>
            <person name="Pevzner P.A."/>
            <person name="Haussler D."/>
            <person name="Roskin K.M."/>
            <person name="Baertsch R."/>
            <person name="Clawson H."/>
            <person name="Furey T.S."/>
            <person name="Hinrichs A.S."/>
            <person name="Karolchik D."/>
            <person name="Kent W.J."/>
            <person name="Rosenbloom K.R."/>
            <person name="Trumbower H."/>
            <person name="Weirauch M."/>
            <person name="Cooper D.N."/>
            <person name="Stenson P.D."/>
            <person name="Ma B."/>
            <person name="Brent M."/>
            <person name="Arumugam M."/>
            <person name="Shteynberg D."/>
            <person name="Copley R.R."/>
            <person name="Taylor M.S."/>
            <person name="Riethman H."/>
            <person name="Mudunuri U."/>
            <person name="Peterson J."/>
            <person name="Guyer M."/>
            <person name="Felsenfeld A."/>
            <person name="Old S."/>
            <person name="Mockrin S."/>
            <person name="Collins F.S."/>
        </authorList>
    </citation>
    <scope>NUCLEOTIDE SEQUENCE [LARGE SCALE GENOMIC DNA]</scope>
    <source>
        <strain evidence="10">Brown Norway</strain>
    </source>
</reference>
<reference evidence="13" key="3">
    <citation type="journal article" date="2006" name="J. Cell. Physiol.">
        <title>Anti-apoptotic factor humanin is expressed in the testis and prevents cell-death in leydig cells during the first wave of spermatogenesis.</title>
        <authorList>
            <person name="Colon E."/>
            <person name="Strand M.L."/>
            <person name="Carlsson-Skwirut C."/>
            <person name="Wahlgren A."/>
            <person name="Svechnikov K.V."/>
            <person name="Cohen P."/>
            <person name="Soeder O."/>
        </authorList>
    </citation>
    <scope>FUNCTION</scope>
    <scope>SUBCELLULAR LOCATION</scope>
    <scope>TISSUE SPECIFICITY</scope>
    <scope>INDUCTION</scope>
</reference>
<reference evidence="13" key="4">
    <citation type="journal article" date="2009" name="PLoS ONE">
        <title>Humanin: a novel central regulator of peripheral insulin action.</title>
        <authorList>
            <person name="Muzumdar R.H."/>
            <person name="Huffman D.M."/>
            <person name="Atzmon G."/>
            <person name="Buettner C."/>
            <person name="Cobb L.J."/>
            <person name="Fishman S."/>
            <person name="Budagov T."/>
            <person name="Cui L."/>
            <person name="Einstein F.H."/>
            <person name="Poduval A."/>
            <person name="Hwang D."/>
            <person name="Barzilai N."/>
            <person name="Cohen P."/>
        </authorList>
    </citation>
    <scope>TISSUE SPECIFICITY</scope>
    <scope>DEVELOPMENTAL STAGE</scope>
</reference>
<reference evidence="13" key="5">
    <citation type="journal article" date="2014" name="Hippocampus">
        <title>The neuroprotection of Rattin against amyloid beta peptide in spatial memory and synaptic plasticity of rats.</title>
        <authorList>
            <person name="Wang Z.J."/>
            <person name="Han W.N."/>
            <person name="Yang G.Z."/>
            <person name="Yuan L."/>
            <person name="Liu X.J."/>
            <person name="Li Q.S."/>
            <person name="Qi J.S."/>
        </authorList>
    </citation>
    <scope>FUNCTION</scope>
</reference>
<reference evidence="13" key="6">
    <citation type="journal article" date="2014" name="PLoS ONE">
        <title>Antiapoptotic factor humanin is expressed in normal and tumoral pituitary cells and protects them from TNF-alpha-induced apoptosis.</title>
        <authorList>
            <person name="Gottardo M.F."/>
            <person name="Jaita G."/>
            <person name="Magri M.L."/>
            <person name="Zarate S."/>
            <person name="Moreno Ayala M."/>
            <person name="Ferraris J."/>
            <person name="Eijo G."/>
            <person name="Pisera D."/>
            <person name="Candolfi M."/>
            <person name="Seilicovich A."/>
        </authorList>
    </citation>
    <scope>FUNCTION</scope>
    <scope>SUBCELLULAR LOCATION</scope>
    <scope>TISSUE SPECIFICITY</scope>
    <scope>INDUCTION</scope>
</reference>
<reference evidence="13" key="7">
    <citation type="journal article" date="2015" name="Mol. Cell. Endocrinol.">
        <title>Rat Humanin is encoded and translated in mitochondria and is localized to the mitochondrial compartment where it regulates ROS production.</title>
        <authorList>
            <person name="Paharkova V."/>
            <person name="Alvarez G."/>
            <person name="Nakamura H."/>
            <person name="Cohen P."/>
            <person name="Lee K.W."/>
        </authorList>
    </citation>
    <scope>SUBCELLULAR LOCATION</scope>
</reference>
<reference evidence="13" key="8">
    <citation type="journal article" date="2019" name="Front. Aging Neurosci.">
        <title>Humanin, a Mitochondrial-Derived Peptide Released by Astrocytes, Prevents Synapse Loss in Hippocampal Neurons.</title>
        <authorList>
            <person name="Zarate S.C."/>
            <person name="Traetta M.E."/>
            <person name="Codagnone M.G."/>
            <person name="Seilicovich A."/>
            <person name="Reines A.G."/>
        </authorList>
    </citation>
    <scope>FUNCTION</scope>
    <scope>SUBCELLULAR LOCATION</scope>
    <scope>TISSUE SPECIFICITY</scope>
    <scope>INDUCTION</scope>
</reference>
<reference evidence="13" key="9">
    <citation type="journal article" date="2021" name="Reproduction">
        <title>Mitochondrial humanin peptide acts as a cytoprotective factor in granulosa cell survival.</title>
        <authorList>
            <person name="Marvaldi C."/>
            <person name="Martin D."/>
            <person name="Conte J.G."/>
            <person name="Gottardo M.F."/>
            <person name="Pidre M.L."/>
            <person name="Imsen M."/>
            <person name="Irizarri M."/>
            <person name="Manuel S.L."/>
            <person name="Duncan F.E."/>
            <person name="Romanowski V."/>
            <person name="Seilicovich A."/>
            <person name="Jaita G."/>
        </authorList>
    </citation>
    <scope>FUNCTION</scope>
    <scope>TISSUE SPECIFICITY</scope>
</reference>
<feature type="chain" id="PRO_0000453950" description="Humanin-like protein">
    <location>
        <begin position="1"/>
        <end position="38"/>
    </location>
</feature>
<geneLocation type="mitochondrion" evidence="12"/>